<name>Y2574_MYCTO</name>
<organism>
    <name type="scientific">Mycobacterium tuberculosis (strain CDC 1551 / Oshkosh)</name>
    <dbReference type="NCBI Taxonomy" id="83331"/>
    <lineage>
        <taxon>Bacteria</taxon>
        <taxon>Bacillati</taxon>
        <taxon>Actinomycetota</taxon>
        <taxon>Actinomycetes</taxon>
        <taxon>Mycobacteriales</taxon>
        <taxon>Mycobacteriaceae</taxon>
        <taxon>Mycobacterium</taxon>
        <taxon>Mycobacterium tuberculosis complex</taxon>
    </lineage>
</organism>
<feature type="chain" id="PRO_0000427522" description="Uncharacterized protein MT2650">
    <location>
        <begin position="1"/>
        <end position="167"/>
    </location>
</feature>
<gene>
    <name type="ordered locus">MT2650</name>
</gene>
<proteinExistence type="predicted"/>
<keyword id="KW-1185">Reference proteome</keyword>
<protein>
    <recommendedName>
        <fullName>Uncharacterized protein MT2650</fullName>
    </recommendedName>
</protein>
<sequence length="167" mass="19002">MYPCERVGLSFTETAPYLFRNTVDLAITPEQLFEVLADPQAWPRWATVITKVTWTSPEPFGAGTTRIVEMRGGIVGDEEFISWEPFTRMAFRFNECSTRAVGAFAEDYRVQAIPGGCRLTWTMAQKLAGPARPALFVFRPLLNLALRRFLRNLRRYTDARFAAAQQS</sequence>
<accession>P9WL86</accession>
<accession>L0TA33</accession>
<accession>P65017</accession>
<accession>Q50647</accession>
<reference key="1">
    <citation type="journal article" date="2002" name="J. Bacteriol.">
        <title>Whole-genome comparison of Mycobacterium tuberculosis clinical and laboratory strains.</title>
        <authorList>
            <person name="Fleischmann R.D."/>
            <person name="Alland D."/>
            <person name="Eisen J.A."/>
            <person name="Carpenter L."/>
            <person name="White O."/>
            <person name="Peterson J.D."/>
            <person name="DeBoy R.T."/>
            <person name="Dodson R.J."/>
            <person name="Gwinn M.L."/>
            <person name="Haft D.H."/>
            <person name="Hickey E.K."/>
            <person name="Kolonay J.F."/>
            <person name="Nelson W.C."/>
            <person name="Umayam L.A."/>
            <person name="Ermolaeva M.D."/>
            <person name="Salzberg S.L."/>
            <person name="Delcher A."/>
            <person name="Utterback T.R."/>
            <person name="Weidman J.F."/>
            <person name="Khouri H.M."/>
            <person name="Gill J."/>
            <person name="Mikula A."/>
            <person name="Bishai W."/>
            <person name="Jacobs W.R. Jr."/>
            <person name="Venter J.C."/>
            <person name="Fraser C.M."/>
        </authorList>
    </citation>
    <scope>NUCLEOTIDE SEQUENCE [LARGE SCALE GENOMIC DNA]</scope>
    <source>
        <strain>CDC 1551 / Oshkosh</strain>
    </source>
</reference>
<dbReference type="EMBL" id="AE000516">
    <property type="protein sequence ID" value="AAK46963.1"/>
    <property type="molecule type" value="Genomic_DNA"/>
</dbReference>
<dbReference type="PIR" id="E70724">
    <property type="entry name" value="E70724"/>
</dbReference>
<dbReference type="RefSeq" id="WP_003413345.1">
    <property type="nucleotide sequence ID" value="NZ_KK341227.1"/>
</dbReference>
<dbReference type="SMR" id="P9WL86"/>
<dbReference type="KEGG" id="mtc:MT2650"/>
<dbReference type="PATRIC" id="fig|83331.31.peg.2857"/>
<dbReference type="HOGENOM" id="CLU_132575_2_0_11"/>
<dbReference type="Proteomes" id="UP000001020">
    <property type="component" value="Chromosome"/>
</dbReference>
<dbReference type="CDD" id="cd07821">
    <property type="entry name" value="PYR_PYL_RCAR_like"/>
    <property type="match status" value="1"/>
</dbReference>
<dbReference type="Gene3D" id="3.30.530.20">
    <property type="match status" value="1"/>
</dbReference>
<dbReference type="InterPro" id="IPR019587">
    <property type="entry name" value="Polyketide_cyclase/dehydratase"/>
</dbReference>
<dbReference type="InterPro" id="IPR023393">
    <property type="entry name" value="START-like_dom_sf"/>
</dbReference>
<dbReference type="Pfam" id="PF10604">
    <property type="entry name" value="Polyketide_cyc2"/>
    <property type="match status" value="1"/>
</dbReference>
<dbReference type="SUPFAM" id="SSF55961">
    <property type="entry name" value="Bet v1-like"/>
    <property type="match status" value="1"/>
</dbReference>